<gene>
    <name type="primary">ypsC</name>
    <name type="ordered locus">BSU22170</name>
</gene>
<protein>
    <recommendedName>
        <fullName>Putative RNA methyltransferase YpsC</fullName>
        <ecNumber>2.1.1.-</ecNumber>
    </recommendedName>
</protein>
<reference key="1">
    <citation type="journal article" date="1996" name="Microbiology">
        <title>Sequence analysis of the Bacillus subtilis chromosome region between the serA and kdg loci cloned in a yeast artificial chromosome.</title>
        <authorList>
            <person name="Sorokin A.V."/>
            <person name="Azevedo V."/>
            <person name="Zumstein E."/>
            <person name="Galleron N."/>
            <person name="Ehrlich S.D."/>
            <person name="Serror P."/>
        </authorList>
    </citation>
    <scope>NUCLEOTIDE SEQUENCE [GENOMIC DNA]</scope>
    <source>
        <strain>168 / Marburg / ATCC 6051 / DSM 10 / JCM 1465 / NBRC 13719 / NCIMB 3610 / NRRL NRS-744 / VKM B-501</strain>
    </source>
</reference>
<reference key="2">
    <citation type="journal article" date="1997" name="Nature">
        <title>The complete genome sequence of the Gram-positive bacterium Bacillus subtilis.</title>
        <authorList>
            <person name="Kunst F."/>
            <person name="Ogasawara N."/>
            <person name="Moszer I."/>
            <person name="Albertini A.M."/>
            <person name="Alloni G."/>
            <person name="Azevedo V."/>
            <person name="Bertero M.G."/>
            <person name="Bessieres P."/>
            <person name="Bolotin A."/>
            <person name="Borchert S."/>
            <person name="Borriss R."/>
            <person name="Boursier L."/>
            <person name="Brans A."/>
            <person name="Braun M."/>
            <person name="Brignell S.C."/>
            <person name="Bron S."/>
            <person name="Brouillet S."/>
            <person name="Bruschi C.V."/>
            <person name="Caldwell B."/>
            <person name="Capuano V."/>
            <person name="Carter N.M."/>
            <person name="Choi S.-K."/>
            <person name="Codani J.-J."/>
            <person name="Connerton I.F."/>
            <person name="Cummings N.J."/>
            <person name="Daniel R.A."/>
            <person name="Denizot F."/>
            <person name="Devine K.M."/>
            <person name="Duesterhoeft A."/>
            <person name="Ehrlich S.D."/>
            <person name="Emmerson P.T."/>
            <person name="Entian K.-D."/>
            <person name="Errington J."/>
            <person name="Fabret C."/>
            <person name="Ferrari E."/>
            <person name="Foulger D."/>
            <person name="Fritz C."/>
            <person name="Fujita M."/>
            <person name="Fujita Y."/>
            <person name="Fuma S."/>
            <person name="Galizzi A."/>
            <person name="Galleron N."/>
            <person name="Ghim S.-Y."/>
            <person name="Glaser P."/>
            <person name="Goffeau A."/>
            <person name="Golightly E.J."/>
            <person name="Grandi G."/>
            <person name="Guiseppi G."/>
            <person name="Guy B.J."/>
            <person name="Haga K."/>
            <person name="Haiech J."/>
            <person name="Harwood C.R."/>
            <person name="Henaut A."/>
            <person name="Hilbert H."/>
            <person name="Holsappel S."/>
            <person name="Hosono S."/>
            <person name="Hullo M.-F."/>
            <person name="Itaya M."/>
            <person name="Jones L.-M."/>
            <person name="Joris B."/>
            <person name="Karamata D."/>
            <person name="Kasahara Y."/>
            <person name="Klaerr-Blanchard M."/>
            <person name="Klein C."/>
            <person name="Kobayashi Y."/>
            <person name="Koetter P."/>
            <person name="Koningstein G."/>
            <person name="Krogh S."/>
            <person name="Kumano M."/>
            <person name="Kurita K."/>
            <person name="Lapidus A."/>
            <person name="Lardinois S."/>
            <person name="Lauber J."/>
            <person name="Lazarevic V."/>
            <person name="Lee S.-M."/>
            <person name="Levine A."/>
            <person name="Liu H."/>
            <person name="Masuda S."/>
            <person name="Mauel C."/>
            <person name="Medigue C."/>
            <person name="Medina N."/>
            <person name="Mellado R.P."/>
            <person name="Mizuno M."/>
            <person name="Moestl D."/>
            <person name="Nakai S."/>
            <person name="Noback M."/>
            <person name="Noone D."/>
            <person name="O'Reilly M."/>
            <person name="Ogawa K."/>
            <person name="Ogiwara A."/>
            <person name="Oudega B."/>
            <person name="Park S.-H."/>
            <person name="Parro V."/>
            <person name="Pohl T.M."/>
            <person name="Portetelle D."/>
            <person name="Porwollik S."/>
            <person name="Prescott A.M."/>
            <person name="Presecan E."/>
            <person name="Pujic P."/>
            <person name="Purnelle B."/>
            <person name="Rapoport G."/>
            <person name="Rey M."/>
            <person name="Reynolds S."/>
            <person name="Rieger M."/>
            <person name="Rivolta C."/>
            <person name="Rocha E."/>
            <person name="Roche B."/>
            <person name="Rose M."/>
            <person name="Sadaie Y."/>
            <person name="Sato T."/>
            <person name="Scanlan E."/>
            <person name="Schleich S."/>
            <person name="Schroeter R."/>
            <person name="Scoffone F."/>
            <person name="Sekiguchi J."/>
            <person name="Sekowska A."/>
            <person name="Seror S.J."/>
            <person name="Serror P."/>
            <person name="Shin B.-S."/>
            <person name="Soldo B."/>
            <person name="Sorokin A."/>
            <person name="Tacconi E."/>
            <person name="Takagi T."/>
            <person name="Takahashi H."/>
            <person name="Takemaru K."/>
            <person name="Takeuchi M."/>
            <person name="Tamakoshi A."/>
            <person name="Tanaka T."/>
            <person name="Terpstra P."/>
            <person name="Tognoni A."/>
            <person name="Tosato V."/>
            <person name="Uchiyama S."/>
            <person name="Vandenbol M."/>
            <person name="Vannier F."/>
            <person name="Vassarotti A."/>
            <person name="Viari A."/>
            <person name="Wambutt R."/>
            <person name="Wedler E."/>
            <person name="Wedler H."/>
            <person name="Weitzenegger T."/>
            <person name="Winters P."/>
            <person name="Wipat A."/>
            <person name="Yamamoto H."/>
            <person name="Yamane K."/>
            <person name="Yasumoto K."/>
            <person name="Yata K."/>
            <person name="Yoshida K."/>
            <person name="Yoshikawa H.-F."/>
            <person name="Zumstein E."/>
            <person name="Yoshikawa H."/>
            <person name="Danchin A."/>
        </authorList>
    </citation>
    <scope>NUCLEOTIDE SEQUENCE [LARGE SCALE GENOMIC DNA]</scope>
    <source>
        <strain>168</strain>
    </source>
</reference>
<reference key="3">
    <citation type="journal article" date="1986" name="J. Biol. Chem.">
        <title>The RNA component of the Bacillus subtilis RNase P. Sequence, activity, and partial secondary structure.</title>
        <authorList>
            <person name="Reich C."/>
            <person name="Gardiner K.J."/>
            <person name="Olsen G.J."/>
            <person name="Pace B."/>
            <person name="Marsh T.L."/>
            <person name="Pace N.R."/>
        </authorList>
    </citation>
    <scope>NUCLEOTIDE SEQUENCE [GENOMIC DNA] OF 1-124</scope>
</reference>
<reference key="4">
    <citation type="journal article" date="2011" name="Proteomics">
        <title>The dynamic protein partnership of RNA polymerase in Bacillus subtilis.</title>
        <authorList>
            <person name="Delumeau O."/>
            <person name="Lecointe F."/>
            <person name="Muntel J."/>
            <person name="Guillot A."/>
            <person name="Guedon E."/>
            <person name="Monnet V."/>
            <person name="Hecker M."/>
            <person name="Becher D."/>
            <person name="Polard P."/>
            <person name="Noirot P."/>
        </authorList>
    </citation>
    <scope>SUBUNIT</scope>
    <source>
        <strain>168</strain>
    </source>
</reference>
<name>YPSC_BACSU</name>
<sequence>MKKYTLIATAPMGIEAVVAKEVRDLGYECKVDNGKVIFEGDALAICRANLWLRTADRIKVQVASFKAKTFDELFEKTKAINWRSFIPENGKFPVIGKSVKSTLASVPDCQRIVKKAIVEKLKLQSGKANDWIEETGAEYKVEISLLKDQALITLDSSGTGLHKRGYRVDQGGAPIKETLAAALVQLTNWTPDRPFVDPFCGSGTIAIEAALIGQNIAPGFNRDFVSEDWEWIGKDLWNKARLEVEEKANYDQPLTIFASDIDHRMVQIAKENAEEAGLGDLIQFKQMQVKDFTTNLEFGVIVGNPPYGERLGEKKAVEQMYKEMGQAFEPLDTWSVYMLTSNENFEEAYGRKATKKRKLFNGFIKTDYYQYWSKVRPQRKKTENA</sequence>
<organism>
    <name type="scientific">Bacillus subtilis (strain 168)</name>
    <dbReference type="NCBI Taxonomy" id="224308"/>
    <lineage>
        <taxon>Bacteria</taxon>
        <taxon>Bacillati</taxon>
        <taxon>Bacillota</taxon>
        <taxon>Bacilli</taxon>
        <taxon>Bacillales</taxon>
        <taxon>Bacillaceae</taxon>
        <taxon>Bacillus</taxon>
    </lineage>
</organism>
<comment type="subunit">
    <text evidence="2">Interacts with the RNA polymerase core.</text>
</comment>
<comment type="similarity">
    <text evidence="3">Belongs to the methyltransferase superfamily.</text>
</comment>
<comment type="sequence caution" evidence="3">
    <conflict type="frameshift">
        <sequence resource="EMBL" id="M13175"/>
    </conflict>
</comment>
<dbReference type="EC" id="2.1.1.-"/>
<dbReference type="EMBL" id="L47838">
    <property type="protein sequence ID" value="AAB38473.1"/>
    <property type="molecule type" value="Genomic_DNA"/>
</dbReference>
<dbReference type="EMBL" id="AL009126">
    <property type="protein sequence ID" value="CAB14134.1"/>
    <property type="molecule type" value="Genomic_DNA"/>
</dbReference>
<dbReference type="EMBL" id="M13175">
    <property type="status" value="NOT_ANNOTATED_CDS"/>
    <property type="molecule type" value="Genomic_DNA"/>
</dbReference>
<dbReference type="PIR" id="F69941">
    <property type="entry name" value="F69941"/>
</dbReference>
<dbReference type="RefSeq" id="WP_009967571.1">
    <property type="nucleotide sequence ID" value="NZ_OZ025638.1"/>
</dbReference>
<dbReference type="SMR" id="P50840"/>
<dbReference type="FunCoup" id="P50840">
    <property type="interactions" value="284"/>
</dbReference>
<dbReference type="STRING" id="224308.BSU22170"/>
<dbReference type="PaxDb" id="224308-BSU22170"/>
<dbReference type="EnsemblBacteria" id="CAB14134">
    <property type="protein sequence ID" value="CAB14134"/>
    <property type="gene ID" value="BSU_22170"/>
</dbReference>
<dbReference type="GeneID" id="939057"/>
<dbReference type="KEGG" id="bsu:BSU22170"/>
<dbReference type="PATRIC" id="fig|224308.179.peg.2421"/>
<dbReference type="eggNOG" id="COG0116">
    <property type="taxonomic scope" value="Bacteria"/>
</dbReference>
<dbReference type="InParanoid" id="P50840"/>
<dbReference type="OrthoDB" id="9809404at2"/>
<dbReference type="PhylomeDB" id="P50840"/>
<dbReference type="BioCyc" id="BSUB:BSU22170-MONOMER"/>
<dbReference type="Proteomes" id="UP000001570">
    <property type="component" value="Chromosome"/>
</dbReference>
<dbReference type="GO" id="GO:0003723">
    <property type="term" value="F:RNA binding"/>
    <property type="evidence" value="ECO:0007669"/>
    <property type="project" value="InterPro"/>
</dbReference>
<dbReference type="GO" id="GO:0008990">
    <property type="term" value="F:rRNA (guanine-N2-)-methyltransferase activity"/>
    <property type="evidence" value="ECO:0000318"/>
    <property type="project" value="GO_Central"/>
</dbReference>
<dbReference type="GO" id="GO:0070043">
    <property type="term" value="F:rRNA (guanine-N7-)-methyltransferase activity"/>
    <property type="evidence" value="ECO:0000318"/>
    <property type="project" value="GO_Central"/>
</dbReference>
<dbReference type="CDD" id="cd11715">
    <property type="entry name" value="THUMP_AdoMetMT"/>
    <property type="match status" value="1"/>
</dbReference>
<dbReference type="FunFam" id="3.30.2130.30:FF:000001">
    <property type="entry name" value="Ribosomal RNA large subunit methyltransferase K/L"/>
    <property type="match status" value="1"/>
</dbReference>
<dbReference type="Gene3D" id="3.30.2130.30">
    <property type="match status" value="1"/>
</dbReference>
<dbReference type="Gene3D" id="3.40.50.150">
    <property type="entry name" value="Vaccinia Virus protein VP39"/>
    <property type="match status" value="1"/>
</dbReference>
<dbReference type="InterPro" id="IPR002052">
    <property type="entry name" value="DNA_methylase_N6_adenine_CS"/>
</dbReference>
<dbReference type="InterPro" id="IPR000241">
    <property type="entry name" value="RlmKL-like_Mtase"/>
</dbReference>
<dbReference type="InterPro" id="IPR053943">
    <property type="entry name" value="RlmKL-like_Mtase_CS"/>
</dbReference>
<dbReference type="InterPro" id="IPR054170">
    <property type="entry name" value="RlmL_1st"/>
</dbReference>
<dbReference type="InterPro" id="IPR029063">
    <property type="entry name" value="SAM-dependent_MTases_sf"/>
</dbReference>
<dbReference type="InterPro" id="IPR004114">
    <property type="entry name" value="THUMP_dom"/>
</dbReference>
<dbReference type="PANTHER" id="PTHR47313">
    <property type="entry name" value="RIBOSOMAL RNA LARGE SUBUNIT METHYLTRANSFERASE K/L"/>
    <property type="match status" value="1"/>
</dbReference>
<dbReference type="PANTHER" id="PTHR47313:SF1">
    <property type="entry name" value="RIBOSOMAL RNA LARGE SUBUNIT METHYLTRANSFERASE K_L"/>
    <property type="match status" value="1"/>
</dbReference>
<dbReference type="Pfam" id="PF22020">
    <property type="entry name" value="RlmL_1st"/>
    <property type="match status" value="1"/>
</dbReference>
<dbReference type="Pfam" id="PF02926">
    <property type="entry name" value="THUMP"/>
    <property type="match status" value="1"/>
</dbReference>
<dbReference type="Pfam" id="PF01170">
    <property type="entry name" value="UPF0020"/>
    <property type="match status" value="1"/>
</dbReference>
<dbReference type="SMART" id="SM00981">
    <property type="entry name" value="THUMP"/>
    <property type="match status" value="1"/>
</dbReference>
<dbReference type="SUPFAM" id="SSF53335">
    <property type="entry name" value="S-adenosyl-L-methionine-dependent methyltransferases"/>
    <property type="match status" value="1"/>
</dbReference>
<dbReference type="PROSITE" id="PS00092">
    <property type="entry name" value="N6_MTASE"/>
    <property type="match status" value="1"/>
</dbReference>
<dbReference type="PROSITE" id="PS51165">
    <property type="entry name" value="THUMP"/>
    <property type="match status" value="1"/>
</dbReference>
<dbReference type="PROSITE" id="PS01261">
    <property type="entry name" value="UPF0020"/>
    <property type="match status" value="1"/>
</dbReference>
<feature type="chain" id="PRO_0000036182" description="Putative RNA methyltransferase YpsC">
    <location>
        <begin position="1"/>
        <end position="385"/>
    </location>
</feature>
<feature type="domain" description="THUMP" evidence="1">
    <location>
        <begin position="44"/>
        <end position="156"/>
    </location>
</feature>
<evidence type="ECO:0000255" key="1">
    <source>
        <dbReference type="PROSITE-ProRule" id="PRU00529"/>
    </source>
</evidence>
<evidence type="ECO:0000269" key="2">
    <source>
    </source>
</evidence>
<evidence type="ECO:0000305" key="3"/>
<accession>P50840</accession>
<proteinExistence type="evidence at protein level"/>
<keyword id="KW-0489">Methyltransferase</keyword>
<keyword id="KW-1185">Reference proteome</keyword>
<keyword id="KW-0808">Transferase</keyword>